<organism>
    <name type="scientific">Homo sapiens</name>
    <name type="common">Human</name>
    <dbReference type="NCBI Taxonomy" id="9606"/>
    <lineage>
        <taxon>Eukaryota</taxon>
        <taxon>Metazoa</taxon>
        <taxon>Chordata</taxon>
        <taxon>Craniata</taxon>
        <taxon>Vertebrata</taxon>
        <taxon>Euteleostomi</taxon>
        <taxon>Mammalia</taxon>
        <taxon>Eutheria</taxon>
        <taxon>Euarchontoglires</taxon>
        <taxon>Primates</taxon>
        <taxon>Haplorrhini</taxon>
        <taxon>Catarrhini</taxon>
        <taxon>Hominidae</taxon>
        <taxon>Homo</taxon>
    </lineage>
</organism>
<gene>
    <name type="primary">PHTF2</name>
</gene>
<comment type="subcellular location">
    <subcellularLocation>
        <location evidence="1">Membrane</location>
        <topology evidence="1">Multi-pass membrane protein</topology>
    </subcellularLocation>
</comment>
<comment type="alternative products">
    <event type="alternative splicing"/>
    <isoform>
        <id>Q8N3S3-1</id>
        <name>1</name>
        <sequence type="displayed"/>
    </isoform>
    <isoform>
        <id>Q8N3S3-2</id>
        <name>2</name>
        <sequence type="described" ref="VSP_031192"/>
    </isoform>
    <isoform>
        <id>Q8N3S3-3</id>
        <name>3</name>
        <sequence type="described" ref="VSP_031192 VSP_031193"/>
    </isoform>
    <isoform>
        <id>Q8N3S3-4</id>
        <name>4</name>
        <sequence type="described" ref="VSP_031192 VSP_031193 VSP_031194"/>
    </isoform>
    <isoform>
        <id>Q8N3S3-5</id>
        <name>5</name>
        <sequence type="described" ref="VSP_031192 VSP_046275 VSP_046276"/>
    </isoform>
    <isoform>
        <id>Q8N3S3-6</id>
        <name>6</name>
        <sequence type="described" ref="VSP_031192 VSP_031193 VSP_046275 VSP_046276"/>
    </isoform>
    <isoform>
        <id>Q8N3S3-7</id>
        <name>7</name>
        <sequence type="described" ref="VSP_031192 VSP_031193 VSP_057299 VSP_057300"/>
    </isoform>
</comment>
<proteinExistence type="evidence at protein level"/>
<feature type="chain" id="PRO_0000318509" description="Protein PHTF2">
    <location>
        <begin position="1"/>
        <end position="785"/>
    </location>
</feature>
<feature type="transmembrane region" description="Helical" evidence="1">
    <location>
        <begin position="136"/>
        <end position="156"/>
    </location>
</feature>
<feature type="transmembrane region" description="Helical" evidence="1">
    <location>
        <begin position="164"/>
        <end position="184"/>
    </location>
</feature>
<feature type="transmembrane region" description="Helical" evidence="1">
    <location>
        <begin position="497"/>
        <end position="517"/>
    </location>
</feature>
<feature type="transmembrane region" description="Helical" evidence="1">
    <location>
        <begin position="553"/>
        <end position="573"/>
    </location>
</feature>
<feature type="transmembrane region" description="Helical" evidence="1">
    <location>
        <begin position="634"/>
        <end position="654"/>
    </location>
</feature>
<feature type="transmembrane region" description="Helical" evidence="1">
    <location>
        <begin position="668"/>
        <end position="688"/>
    </location>
</feature>
<feature type="transmembrane region" description="Helical" evidence="1">
    <location>
        <begin position="760"/>
        <end position="780"/>
    </location>
</feature>
<feature type="domain" description="PHTF" evidence="1">
    <location>
        <begin position="46"/>
        <end position="191"/>
    </location>
</feature>
<feature type="region of interest" description="Disordered" evidence="2">
    <location>
        <begin position="190"/>
        <end position="239"/>
    </location>
</feature>
<feature type="region of interest" description="Disordered" evidence="2">
    <location>
        <begin position="304"/>
        <end position="401"/>
    </location>
</feature>
<feature type="compositionally biased region" description="Basic residues" evidence="2">
    <location>
        <begin position="200"/>
        <end position="209"/>
    </location>
</feature>
<feature type="compositionally biased region" description="Basic and acidic residues" evidence="2">
    <location>
        <begin position="210"/>
        <end position="219"/>
    </location>
</feature>
<feature type="compositionally biased region" description="Polar residues" evidence="2">
    <location>
        <begin position="220"/>
        <end position="239"/>
    </location>
</feature>
<feature type="compositionally biased region" description="Polar residues" evidence="2">
    <location>
        <begin position="309"/>
        <end position="333"/>
    </location>
</feature>
<feature type="compositionally biased region" description="Basic residues" evidence="2">
    <location>
        <begin position="359"/>
        <end position="369"/>
    </location>
</feature>
<feature type="compositionally biased region" description="Low complexity" evidence="2">
    <location>
        <begin position="378"/>
        <end position="390"/>
    </location>
</feature>
<feature type="compositionally biased region" description="Basic and acidic residues" evidence="2">
    <location>
        <begin position="391"/>
        <end position="400"/>
    </location>
</feature>
<feature type="glycosylation site" description="N-linked (GlcNAc...) asparagine" evidence="1">
    <location>
        <position position="329"/>
    </location>
</feature>
<feature type="glycosylation site" description="N-linked (GlcNAc...) asparagine" evidence="1">
    <location>
        <position position="697"/>
    </location>
</feature>
<feature type="glycosylation site" description="N-linked (GlcNAc...) asparagine" evidence="1">
    <location>
        <position position="756"/>
    </location>
</feature>
<feature type="splice variant" id="VSP_031192" description="In isoform 2, isoform 3, isoform 4, isoform 5, isoform 6 and isoform 7." evidence="3 4 5">
    <location>
        <begin position="16"/>
        <end position="49"/>
    </location>
</feature>
<feature type="splice variant" id="VSP_031193" description="In isoform 3, isoform 4, isoform 6 and isoform 7." evidence="3 4 5">
    <location>
        <begin position="69"/>
        <end position="72"/>
    </location>
</feature>
<feature type="splice variant" id="VSP_046275" description="In isoform 5 and isoform 6." evidence="4">
    <original>DAPKSGTSCSSRCSSSR</original>
    <variation>VYTLSLSVYIRIYFICY</variation>
    <location>
        <begin position="374"/>
        <end position="390"/>
    </location>
</feature>
<feature type="splice variant" id="VSP_046276" description="In isoform 5 and isoform 6." evidence="4">
    <location>
        <begin position="391"/>
        <end position="785"/>
    </location>
</feature>
<feature type="splice variant" id="VSP_057299" description="In isoform 7." evidence="3">
    <original>RLLF</original>
    <variation>VGIM</variation>
    <location>
        <begin position="581"/>
        <end position="584"/>
    </location>
</feature>
<feature type="splice variant" id="VSP_057300" description="In isoform 7." evidence="3">
    <location>
        <begin position="585"/>
        <end position="785"/>
    </location>
</feature>
<feature type="splice variant" id="VSP_031194" description="In isoform 4." evidence="5">
    <location>
        <begin position="654"/>
        <end position="705"/>
    </location>
</feature>
<feature type="sequence conflict" description="In Ref. 2; CAD38610." evidence="6" ref="2">
    <original>S</original>
    <variation>P</variation>
    <location>
        <position position="3"/>
    </location>
</feature>
<feature type="sequence conflict" description="In Ref. 6; AAH22419." evidence="6" ref="6">
    <original>R</original>
    <variation>H</variation>
    <location sequence="Q8N3S3-5">
        <position position="350"/>
    </location>
</feature>
<feature type="sequence conflict" description="In Ref. 6; AAH67742." evidence="6" ref="6">
    <original>R</original>
    <variation>H</variation>
    <location sequence="Q8N3S3-6">
        <position position="346"/>
    </location>
</feature>
<reference key="1">
    <citation type="journal article" date="2004" name="Nat. Genet.">
        <title>Complete sequencing and characterization of 21,243 full-length human cDNAs.</title>
        <authorList>
            <person name="Ota T."/>
            <person name="Suzuki Y."/>
            <person name="Nishikawa T."/>
            <person name="Otsuki T."/>
            <person name="Sugiyama T."/>
            <person name="Irie R."/>
            <person name="Wakamatsu A."/>
            <person name="Hayashi K."/>
            <person name="Sato H."/>
            <person name="Nagai K."/>
            <person name="Kimura K."/>
            <person name="Makita H."/>
            <person name="Sekine M."/>
            <person name="Obayashi M."/>
            <person name="Nishi T."/>
            <person name="Shibahara T."/>
            <person name="Tanaka T."/>
            <person name="Ishii S."/>
            <person name="Yamamoto J."/>
            <person name="Saito K."/>
            <person name="Kawai Y."/>
            <person name="Isono Y."/>
            <person name="Nakamura Y."/>
            <person name="Nagahari K."/>
            <person name="Murakami K."/>
            <person name="Yasuda T."/>
            <person name="Iwayanagi T."/>
            <person name="Wagatsuma M."/>
            <person name="Shiratori A."/>
            <person name="Sudo H."/>
            <person name="Hosoiri T."/>
            <person name="Kaku Y."/>
            <person name="Kodaira H."/>
            <person name="Kondo H."/>
            <person name="Sugawara M."/>
            <person name="Takahashi M."/>
            <person name="Kanda K."/>
            <person name="Yokoi T."/>
            <person name="Furuya T."/>
            <person name="Kikkawa E."/>
            <person name="Omura Y."/>
            <person name="Abe K."/>
            <person name="Kamihara K."/>
            <person name="Katsuta N."/>
            <person name="Sato K."/>
            <person name="Tanikawa M."/>
            <person name="Yamazaki M."/>
            <person name="Ninomiya K."/>
            <person name="Ishibashi T."/>
            <person name="Yamashita H."/>
            <person name="Murakawa K."/>
            <person name="Fujimori K."/>
            <person name="Tanai H."/>
            <person name="Kimata M."/>
            <person name="Watanabe M."/>
            <person name="Hiraoka S."/>
            <person name="Chiba Y."/>
            <person name="Ishida S."/>
            <person name="Ono Y."/>
            <person name="Takiguchi S."/>
            <person name="Watanabe S."/>
            <person name="Yosida M."/>
            <person name="Hotuta T."/>
            <person name="Kusano J."/>
            <person name="Kanehori K."/>
            <person name="Takahashi-Fujii A."/>
            <person name="Hara H."/>
            <person name="Tanase T.-O."/>
            <person name="Nomura Y."/>
            <person name="Togiya S."/>
            <person name="Komai F."/>
            <person name="Hara R."/>
            <person name="Takeuchi K."/>
            <person name="Arita M."/>
            <person name="Imose N."/>
            <person name="Musashino K."/>
            <person name="Yuuki H."/>
            <person name="Oshima A."/>
            <person name="Sasaki N."/>
            <person name="Aotsuka S."/>
            <person name="Yoshikawa Y."/>
            <person name="Matsunawa H."/>
            <person name="Ichihara T."/>
            <person name="Shiohata N."/>
            <person name="Sano S."/>
            <person name="Moriya S."/>
            <person name="Momiyama H."/>
            <person name="Satoh N."/>
            <person name="Takami S."/>
            <person name="Terashima Y."/>
            <person name="Suzuki O."/>
            <person name="Nakagawa S."/>
            <person name="Senoh A."/>
            <person name="Mizoguchi H."/>
            <person name="Goto Y."/>
            <person name="Shimizu F."/>
            <person name="Wakebe H."/>
            <person name="Hishigaki H."/>
            <person name="Watanabe T."/>
            <person name="Sugiyama A."/>
            <person name="Takemoto M."/>
            <person name="Kawakami B."/>
            <person name="Yamazaki M."/>
            <person name="Watanabe K."/>
            <person name="Kumagai A."/>
            <person name="Itakura S."/>
            <person name="Fukuzumi Y."/>
            <person name="Fujimori Y."/>
            <person name="Komiyama M."/>
            <person name="Tashiro H."/>
            <person name="Tanigami A."/>
            <person name="Fujiwara T."/>
            <person name="Ono T."/>
            <person name="Yamada K."/>
            <person name="Fujii Y."/>
            <person name="Ozaki K."/>
            <person name="Hirao M."/>
            <person name="Ohmori Y."/>
            <person name="Kawabata A."/>
            <person name="Hikiji T."/>
            <person name="Kobatake N."/>
            <person name="Inagaki H."/>
            <person name="Ikema Y."/>
            <person name="Okamoto S."/>
            <person name="Okitani R."/>
            <person name="Kawakami T."/>
            <person name="Noguchi S."/>
            <person name="Itoh T."/>
            <person name="Shigeta K."/>
            <person name="Senba T."/>
            <person name="Matsumura K."/>
            <person name="Nakajima Y."/>
            <person name="Mizuno T."/>
            <person name="Morinaga M."/>
            <person name="Sasaki M."/>
            <person name="Togashi T."/>
            <person name="Oyama M."/>
            <person name="Hata H."/>
            <person name="Watanabe M."/>
            <person name="Komatsu T."/>
            <person name="Mizushima-Sugano J."/>
            <person name="Satoh T."/>
            <person name="Shirai Y."/>
            <person name="Takahashi Y."/>
            <person name="Nakagawa K."/>
            <person name="Okumura K."/>
            <person name="Nagase T."/>
            <person name="Nomura N."/>
            <person name="Kikuchi H."/>
            <person name="Masuho Y."/>
            <person name="Yamashita R."/>
            <person name="Nakai K."/>
            <person name="Yada T."/>
            <person name="Nakamura Y."/>
            <person name="Ohara O."/>
            <person name="Isogai T."/>
            <person name="Sugano S."/>
        </authorList>
    </citation>
    <scope>NUCLEOTIDE SEQUENCE [LARGE SCALE MRNA] (ISOFORM 7)</scope>
</reference>
<reference key="2">
    <citation type="journal article" date="2007" name="BMC Genomics">
        <title>The full-ORF clone resource of the German cDNA consortium.</title>
        <authorList>
            <person name="Bechtel S."/>
            <person name="Rosenfelder H."/>
            <person name="Duda A."/>
            <person name="Schmidt C.P."/>
            <person name="Ernst U."/>
            <person name="Wellenreuther R."/>
            <person name="Mehrle A."/>
            <person name="Schuster C."/>
            <person name="Bahr A."/>
            <person name="Bloecker H."/>
            <person name="Heubner D."/>
            <person name="Hoerlein A."/>
            <person name="Michel G."/>
            <person name="Wedler H."/>
            <person name="Koehrer K."/>
            <person name="Ottenwaelder B."/>
            <person name="Poustka A."/>
            <person name="Wiemann S."/>
            <person name="Schupp I."/>
        </authorList>
    </citation>
    <scope>NUCLEOTIDE SEQUENCE [LARGE SCALE MRNA] (ISOFORMS 1 AND 4)</scope>
    <source>
        <tissue>Skeletal muscle</tissue>
        <tissue>Testis</tissue>
    </source>
</reference>
<reference key="3">
    <citation type="journal article" date="2003" name="Nature">
        <title>The DNA sequence of human chromosome 7.</title>
        <authorList>
            <person name="Hillier L.W."/>
            <person name="Fulton R.S."/>
            <person name="Fulton L.A."/>
            <person name="Graves T.A."/>
            <person name="Pepin K.H."/>
            <person name="Wagner-McPherson C."/>
            <person name="Layman D."/>
            <person name="Maas J."/>
            <person name="Jaeger S."/>
            <person name="Walker R."/>
            <person name="Wylie K."/>
            <person name="Sekhon M."/>
            <person name="Becker M.C."/>
            <person name="O'Laughlin M.D."/>
            <person name="Schaller M.E."/>
            <person name="Fewell G.A."/>
            <person name="Delehaunty K.D."/>
            <person name="Miner T.L."/>
            <person name="Nash W.E."/>
            <person name="Cordes M."/>
            <person name="Du H."/>
            <person name="Sun H."/>
            <person name="Edwards J."/>
            <person name="Bradshaw-Cordum H."/>
            <person name="Ali J."/>
            <person name="Andrews S."/>
            <person name="Isak A."/>
            <person name="Vanbrunt A."/>
            <person name="Nguyen C."/>
            <person name="Du F."/>
            <person name="Lamar B."/>
            <person name="Courtney L."/>
            <person name="Kalicki J."/>
            <person name="Ozersky P."/>
            <person name="Bielicki L."/>
            <person name="Scott K."/>
            <person name="Holmes A."/>
            <person name="Harkins R."/>
            <person name="Harris A."/>
            <person name="Strong C.M."/>
            <person name="Hou S."/>
            <person name="Tomlinson C."/>
            <person name="Dauphin-Kohlberg S."/>
            <person name="Kozlowicz-Reilly A."/>
            <person name="Leonard S."/>
            <person name="Rohlfing T."/>
            <person name="Rock S.M."/>
            <person name="Tin-Wollam A.-M."/>
            <person name="Abbott A."/>
            <person name="Minx P."/>
            <person name="Maupin R."/>
            <person name="Strowmatt C."/>
            <person name="Latreille P."/>
            <person name="Miller N."/>
            <person name="Johnson D."/>
            <person name="Murray J."/>
            <person name="Woessner J.P."/>
            <person name="Wendl M.C."/>
            <person name="Yang S.-P."/>
            <person name="Schultz B.R."/>
            <person name="Wallis J.W."/>
            <person name="Spieth J."/>
            <person name="Bieri T.A."/>
            <person name="Nelson J.O."/>
            <person name="Berkowicz N."/>
            <person name="Wohldmann P.E."/>
            <person name="Cook L.L."/>
            <person name="Hickenbotham M.T."/>
            <person name="Eldred J."/>
            <person name="Williams D."/>
            <person name="Bedell J.A."/>
            <person name="Mardis E.R."/>
            <person name="Clifton S.W."/>
            <person name="Chissoe S.L."/>
            <person name="Marra M.A."/>
            <person name="Raymond C."/>
            <person name="Haugen E."/>
            <person name="Gillett W."/>
            <person name="Zhou Y."/>
            <person name="James R."/>
            <person name="Phelps K."/>
            <person name="Iadanoto S."/>
            <person name="Bubb K."/>
            <person name="Simms E."/>
            <person name="Levy R."/>
            <person name="Clendenning J."/>
            <person name="Kaul R."/>
            <person name="Kent W.J."/>
            <person name="Furey T.S."/>
            <person name="Baertsch R.A."/>
            <person name="Brent M.R."/>
            <person name="Keibler E."/>
            <person name="Flicek P."/>
            <person name="Bork P."/>
            <person name="Suyama M."/>
            <person name="Bailey J.A."/>
            <person name="Portnoy M.E."/>
            <person name="Torrents D."/>
            <person name="Chinwalla A.T."/>
            <person name="Gish W.R."/>
            <person name="Eddy S.R."/>
            <person name="McPherson J.D."/>
            <person name="Olson M.V."/>
            <person name="Eichler E.E."/>
            <person name="Green E.D."/>
            <person name="Waterston R.H."/>
            <person name="Wilson R.K."/>
        </authorList>
    </citation>
    <scope>NUCLEOTIDE SEQUENCE [LARGE SCALE GENOMIC DNA]</scope>
</reference>
<reference key="4">
    <citation type="journal article" date="2003" name="Science">
        <title>Human chromosome 7: DNA sequence and biology.</title>
        <authorList>
            <person name="Scherer S.W."/>
            <person name="Cheung J."/>
            <person name="MacDonald J.R."/>
            <person name="Osborne L.R."/>
            <person name="Nakabayashi K."/>
            <person name="Herbrick J.-A."/>
            <person name="Carson A.R."/>
            <person name="Parker-Katiraee L."/>
            <person name="Skaug J."/>
            <person name="Khaja R."/>
            <person name="Zhang J."/>
            <person name="Hudek A.K."/>
            <person name="Li M."/>
            <person name="Haddad M."/>
            <person name="Duggan G.E."/>
            <person name="Fernandez B.A."/>
            <person name="Kanematsu E."/>
            <person name="Gentles S."/>
            <person name="Christopoulos C.C."/>
            <person name="Choufani S."/>
            <person name="Kwasnicka D."/>
            <person name="Zheng X.H."/>
            <person name="Lai Z."/>
            <person name="Nusskern D.R."/>
            <person name="Zhang Q."/>
            <person name="Gu Z."/>
            <person name="Lu F."/>
            <person name="Zeesman S."/>
            <person name="Nowaczyk M.J."/>
            <person name="Teshima I."/>
            <person name="Chitayat D."/>
            <person name="Shuman C."/>
            <person name="Weksberg R."/>
            <person name="Zackai E.H."/>
            <person name="Grebe T.A."/>
            <person name="Cox S.R."/>
            <person name="Kirkpatrick S.J."/>
            <person name="Rahman N."/>
            <person name="Friedman J.M."/>
            <person name="Heng H.H.Q."/>
            <person name="Pelicci P.G."/>
            <person name="Lo-Coco F."/>
            <person name="Belloni E."/>
            <person name="Shaffer L.G."/>
            <person name="Pober B."/>
            <person name="Morton C.C."/>
            <person name="Gusella J.F."/>
            <person name="Bruns G.A.P."/>
            <person name="Korf B.R."/>
            <person name="Quade B.J."/>
            <person name="Ligon A.H."/>
            <person name="Ferguson H."/>
            <person name="Higgins A.W."/>
            <person name="Leach N.T."/>
            <person name="Herrick S.R."/>
            <person name="Lemyre E."/>
            <person name="Farra C.G."/>
            <person name="Kim H.-G."/>
            <person name="Summers A.M."/>
            <person name="Gripp K.W."/>
            <person name="Roberts W."/>
            <person name="Szatmari P."/>
            <person name="Winsor E.J.T."/>
            <person name="Grzeschik K.-H."/>
            <person name="Teebi A."/>
            <person name="Minassian B.A."/>
            <person name="Kere J."/>
            <person name="Armengol L."/>
            <person name="Pujana M.A."/>
            <person name="Estivill X."/>
            <person name="Wilson M.D."/>
            <person name="Koop B.F."/>
            <person name="Tosi S."/>
            <person name="Moore G.E."/>
            <person name="Boright A.P."/>
            <person name="Zlotorynski E."/>
            <person name="Kerem B."/>
            <person name="Kroisel P.M."/>
            <person name="Petek E."/>
            <person name="Oscier D.G."/>
            <person name="Mould S.J."/>
            <person name="Doehner H."/>
            <person name="Doehner K."/>
            <person name="Rommens J.M."/>
            <person name="Vincent J.B."/>
            <person name="Venter J.C."/>
            <person name="Li P.W."/>
            <person name="Mural R.J."/>
            <person name="Adams M.D."/>
            <person name="Tsui L.-C."/>
        </authorList>
    </citation>
    <scope>NUCLEOTIDE SEQUENCE [LARGE SCALE GENOMIC DNA]</scope>
</reference>
<reference key="5">
    <citation type="submission" date="2005-09" db="EMBL/GenBank/DDBJ databases">
        <authorList>
            <person name="Mural R.J."/>
            <person name="Istrail S."/>
            <person name="Sutton G.G."/>
            <person name="Florea L."/>
            <person name="Halpern A.L."/>
            <person name="Mobarry C.M."/>
            <person name="Lippert R."/>
            <person name="Walenz B."/>
            <person name="Shatkay H."/>
            <person name="Dew I."/>
            <person name="Miller J.R."/>
            <person name="Flanigan M.J."/>
            <person name="Edwards N.J."/>
            <person name="Bolanos R."/>
            <person name="Fasulo D."/>
            <person name="Halldorsson B.V."/>
            <person name="Hannenhalli S."/>
            <person name="Turner R."/>
            <person name="Yooseph S."/>
            <person name="Lu F."/>
            <person name="Nusskern D.R."/>
            <person name="Shue B.C."/>
            <person name="Zheng X.H."/>
            <person name="Zhong F."/>
            <person name="Delcher A.L."/>
            <person name="Huson D.H."/>
            <person name="Kravitz S.A."/>
            <person name="Mouchard L."/>
            <person name="Reinert K."/>
            <person name="Remington K.A."/>
            <person name="Clark A.G."/>
            <person name="Waterman M.S."/>
            <person name="Eichler E.E."/>
            <person name="Adams M.D."/>
            <person name="Hunkapiller M.W."/>
            <person name="Myers E.W."/>
            <person name="Venter J.C."/>
        </authorList>
    </citation>
    <scope>NUCLEOTIDE SEQUENCE [LARGE SCALE GENOMIC DNA]</scope>
</reference>
<reference key="6">
    <citation type="journal article" date="2004" name="Genome Res.">
        <title>The status, quality, and expansion of the NIH full-length cDNA project: the Mammalian Gene Collection (MGC).</title>
        <authorList>
            <consortium name="The MGC Project Team"/>
        </authorList>
    </citation>
    <scope>NUCLEOTIDE SEQUENCE [LARGE SCALE MRNA] (ISOFORMS 2; 3; 5 AND 6)</scope>
    <source>
        <tissue>Brain</tissue>
        <tissue>Skeletal muscle</tissue>
    </source>
</reference>
<name>PHTF2_HUMAN</name>
<protein>
    <recommendedName>
        <fullName evidence="6">Protein PHTF2</fullName>
    </recommendedName>
</protein>
<accession>Q8N3S3</accession>
<accession>A0JP04</accession>
<accession>A0JP05</accession>
<accession>A4D1C2</accession>
<accession>B3KQZ2</accession>
<accession>E9PEE3</accession>
<accession>G5E9H7</accession>
<accession>Q6NW35</accession>
<accession>Q8TBW4</accession>
<accession>Q9H099</accession>
<dbReference type="EMBL" id="AK090643">
    <property type="protein sequence ID" value="BAG52204.1"/>
    <property type="molecule type" value="mRNA"/>
</dbReference>
<dbReference type="EMBL" id="AL136883">
    <property type="protein sequence ID" value="CAB66817.1"/>
    <property type="molecule type" value="mRNA"/>
</dbReference>
<dbReference type="EMBL" id="AL831969">
    <property type="protein sequence ID" value="CAD38610.1"/>
    <property type="molecule type" value="mRNA"/>
</dbReference>
<dbReference type="EMBL" id="AC004955">
    <property type="status" value="NOT_ANNOTATED_CDS"/>
    <property type="molecule type" value="Genomic_DNA"/>
</dbReference>
<dbReference type="EMBL" id="AC004990">
    <property type="status" value="NOT_ANNOTATED_CDS"/>
    <property type="molecule type" value="Genomic_DNA"/>
</dbReference>
<dbReference type="EMBL" id="AC073520">
    <property type="status" value="NOT_ANNOTATED_CDS"/>
    <property type="molecule type" value="Genomic_DNA"/>
</dbReference>
<dbReference type="EMBL" id="CH236949">
    <property type="protein sequence ID" value="EAL24195.1"/>
    <property type="molecule type" value="Genomic_DNA"/>
</dbReference>
<dbReference type="EMBL" id="CH471091">
    <property type="protein sequence ID" value="EAW77027.1"/>
    <property type="molecule type" value="Genomic_DNA"/>
</dbReference>
<dbReference type="EMBL" id="CH471091">
    <property type="protein sequence ID" value="EAW77028.1"/>
    <property type="molecule type" value="Genomic_DNA"/>
</dbReference>
<dbReference type="EMBL" id="CH471091">
    <property type="protein sequence ID" value="EAW77031.1"/>
    <property type="molecule type" value="Genomic_DNA"/>
</dbReference>
<dbReference type="EMBL" id="BC022419">
    <property type="protein sequence ID" value="AAH22419.1"/>
    <property type="molecule type" value="mRNA"/>
</dbReference>
<dbReference type="EMBL" id="BC067742">
    <property type="protein sequence ID" value="AAH67742.1"/>
    <property type="molecule type" value="mRNA"/>
</dbReference>
<dbReference type="EMBL" id="BC127093">
    <property type="protein sequence ID" value="AAI27094.1"/>
    <property type="molecule type" value="mRNA"/>
</dbReference>
<dbReference type="EMBL" id="BC127094">
    <property type="protein sequence ID" value="AAI27095.1"/>
    <property type="molecule type" value="mRNA"/>
</dbReference>
<dbReference type="CCDS" id="CCDS47621.1">
    <molecule id="Q8N3S3-2"/>
</dbReference>
<dbReference type="CCDS" id="CCDS47622.1">
    <molecule id="Q8N3S3-3"/>
</dbReference>
<dbReference type="CCDS" id="CCDS47623.1">
    <molecule id="Q8N3S3-5"/>
</dbReference>
<dbReference type="CCDS" id="CCDS47624.1">
    <molecule id="Q8N3S3-6"/>
</dbReference>
<dbReference type="CCDS" id="CCDS94132.1">
    <molecule id="Q8N3S3-1"/>
</dbReference>
<dbReference type="CCDS" id="CCDS94133.1">
    <molecule id="Q8N3S3-4"/>
</dbReference>
<dbReference type="CCDS" id="CCDS94134.1">
    <molecule id="Q8N3S3-7"/>
</dbReference>
<dbReference type="RefSeq" id="NP_001120829.1">
    <molecule id="Q8N3S3-2"/>
    <property type="nucleotide sequence ID" value="NM_001127357.2"/>
</dbReference>
<dbReference type="RefSeq" id="NP_001120830.1">
    <molecule id="Q8N3S3-3"/>
    <property type="nucleotide sequence ID" value="NM_001127358.2"/>
</dbReference>
<dbReference type="RefSeq" id="NP_001120831.1">
    <molecule id="Q8N3S3-5"/>
    <property type="nucleotide sequence ID" value="NM_001127359.2"/>
</dbReference>
<dbReference type="RefSeq" id="NP_001120832.1">
    <molecule id="Q8N3S3-6"/>
    <property type="nucleotide sequence ID" value="NM_001127360.2"/>
</dbReference>
<dbReference type="RefSeq" id="NP_001353010.1">
    <molecule id="Q8N3S3-4"/>
    <property type="nucleotide sequence ID" value="NM_001366081.1"/>
</dbReference>
<dbReference type="RefSeq" id="NP_001353011.1">
    <molecule id="Q8N3S3-7"/>
    <property type="nucleotide sequence ID" value="NM_001366082.2"/>
</dbReference>
<dbReference type="RefSeq" id="NP_001353015.1">
    <molecule id="Q8N3S3-3"/>
    <property type="nucleotide sequence ID" value="NM_001366086.1"/>
</dbReference>
<dbReference type="RefSeq" id="NP_001353017.1">
    <molecule id="Q8N3S3-7"/>
    <property type="nucleotide sequence ID" value="NM_001366088.2"/>
</dbReference>
<dbReference type="RefSeq" id="NP_001353018.1">
    <molecule id="Q8N3S3-1"/>
    <property type="nucleotide sequence ID" value="NM_001366089.1"/>
</dbReference>
<dbReference type="RefSeq" id="NP_001382201.1">
    <molecule id="Q8N3S3-2"/>
    <property type="nucleotide sequence ID" value="NM_001395272.1"/>
</dbReference>
<dbReference type="RefSeq" id="NP_065165.3">
    <molecule id="Q8N3S3-3"/>
    <property type="nucleotide sequence ID" value="NM_020432.4"/>
</dbReference>
<dbReference type="RefSeq" id="XP_005250565.1">
    <property type="nucleotide sequence ID" value="XM_005250508.4"/>
</dbReference>
<dbReference type="RefSeq" id="XP_005250566.1">
    <molecule id="Q8N3S3-2"/>
    <property type="nucleotide sequence ID" value="XM_005250509.5"/>
</dbReference>
<dbReference type="RefSeq" id="XP_054214661.1">
    <molecule id="Q8N3S3-2"/>
    <property type="nucleotide sequence ID" value="XM_054358686.1"/>
</dbReference>
<dbReference type="BioGRID" id="121413">
    <property type="interactions" value="16"/>
</dbReference>
<dbReference type="FunCoup" id="Q8N3S3">
    <property type="interactions" value="1509"/>
</dbReference>
<dbReference type="IntAct" id="Q8N3S3">
    <property type="interactions" value="14"/>
</dbReference>
<dbReference type="STRING" id="9606.ENSP00000403042"/>
<dbReference type="TCDB" id="1.A.152.1.3">
    <property type="family name" value="the putative ion channel-receptor (picr) family"/>
</dbReference>
<dbReference type="GlyCosmos" id="Q8N3S3">
    <property type="glycosylation" value="3 sites, No reported glycans"/>
</dbReference>
<dbReference type="GlyGen" id="Q8N3S3">
    <property type="glycosylation" value="3 sites"/>
</dbReference>
<dbReference type="iPTMnet" id="Q8N3S3"/>
<dbReference type="PhosphoSitePlus" id="Q8N3S3"/>
<dbReference type="BioMuta" id="PHTF2"/>
<dbReference type="DMDM" id="166987998"/>
<dbReference type="jPOST" id="Q8N3S3"/>
<dbReference type="MassIVE" id="Q8N3S3"/>
<dbReference type="PaxDb" id="9606-ENSP00000403042"/>
<dbReference type="PeptideAtlas" id="Q8N3S3"/>
<dbReference type="ProteomicsDB" id="19870"/>
<dbReference type="ProteomicsDB" id="33943"/>
<dbReference type="ProteomicsDB" id="3570"/>
<dbReference type="ProteomicsDB" id="71829">
    <molecule id="Q8N3S3-1"/>
</dbReference>
<dbReference type="ProteomicsDB" id="71830">
    <molecule id="Q8N3S3-2"/>
</dbReference>
<dbReference type="ProteomicsDB" id="71831">
    <molecule id="Q8N3S3-3"/>
</dbReference>
<dbReference type="ProteomicsDB" id="71832">
    <molecule id="Q8N3S3-4"/>
</dbReference>
<dbReference type="Antibodypedia" id="53023">
    <property type="antibodies" value="78 antibodies from 16 providers"/>
</dbReference>
<dbReference type="DNASU" id="57157"/>
<dbReference type="Ensembl" id="ENST00000248550.7">
    <molecule id="Q8N3S3-1"/>
    <property type="protein sequence ID" value="ENSP00000248550.7"/>
    <property type="gene ID" value="ENSG00000006576.17"/>
</dbReference>
<dbReference type="Ensembl" id="ENST00000275575.11">
    <molecule id="Q8N3S3-4"/>
    <property type="protein sequence ID" value="ENSP00000275575.7"/>
    <property type="gene ID" value="ENSG00000006576.17"/>
</dbReference>
<dbReference type="Ensembl" id="ENST00000307305.12">
    <molecule id="Q8N3S3-3"/>
    <property type="protein sequence ID" value="ENSP00000307699.8"/>
    <property type="gene ID" value="ENSG00000006576.17"/>
</dbReference>
<dbReference type="Ensembl" id="ENST00000415251.6">
    <molecule id="Q8N3S3-6"/>
    <property type="protein sequence ID" value="ENSP00000408035.2"/>
    <property type="gene ID" value="ENSG00000006576.17"/>
</dbReference>
<dbReference type="Ensembl" id="ENST00000416283.6">
    <molecule id="Q8N3S3-1"/>
    <property type="protein sequence ID" value="ENSP00000400958.3"/>
    <property type="gene ID" value="ENSG00000006576.17"/>
</dbReference>
<dbReference type="Ensembl" id="ENST00000422959.8">
    <molecule id="Q8N3S3-2"/>
    <property type="protein sequence ID" value="ENSP00000403042.2"/>
    <property type="gene ID" value="ENSG00000006576.17"/>
</dbReference>
<dbReference type="Ensembl" id="ENST00000424760.5">
    <molecule id="Q8N3S3-7"/>
    <property type="protein sequence ID" value="ENSP00000403620.1"/>
    <property type="gene ID" value="ENSG00000006576.17"/>
</dbReference>
<dbReference type="Ensembl" id="ENST00000450574.5">
    <molecule id="Q8N3S3-5"/>
    <property type="protein sequence ID" value="ENSP00000387355.1"/>
    <property type="gene ID" value="ENSG00000006576.17"/>
</dbReference>
<dbReference type="GeneID" id="57157"/>
<dbReference type="KEGG" id="hsa:57157"/>
<dbReference type="MANE-Select" id="ENST00000422959.8">
    <molecule id="Q8N3S3-2"/>
    <property type="protein sequence ID" value="ENSP00000403042.2"/>
    <property type="RefSeq nucleotide sequence ID" value="NM_001395272.1"/>
    <property type="RefSeq protein sequence ID" value="NP_001382201.1"/>
</dbReference>
<dbReference type="UCSC" id="uc003ugo.5">
    <molecule id="Q8N3S3-1"/>
    <property type="organism name" value="human"/>
</dbReference>
<dbReference type="AGR" id="HGNC:13411"/>
<dbReference type="CTD" id="57157"/>
<dbReference type="DisGeNET" id="57157"/>
<dbReference type="GeneCards" id="PHTF2"/>
<dbReference type="HGNC" id="HGNC:13411">
    <property type="gene designation" value="PHTF2"/>
</dbReference>
<dbReference type="HPA" id="ENSG00000006576">
    <property type="expression patterns" value="Tissue enhanced (skeletal muscle, tongue)"/>
</dbReference>
<dbReference type="neXtProt" id="NX_Q8N3S3"/>
<dbReference type="OpenTargets" id="ENSG00000006576"/>
<dbReference type="PharmGKB" id="PA33279"/>
<dbReference type="VEuPathDB" id="HostDB:ENSG00000006576"/>
<dbReference type="eggNOG" id="ENOG502QQGQ">
    <property type="taxonomic scope" value="Eukaryota"/>
</dbReference>
<dbReference type="GeneTree" id="ENSGT00390000011648"/>
<dbReference type="HOGENOM" id="CLU_013937_0_0_1"/>
<dbReference type="InParanoid" id="Q8N3S3"/>
<dbReference type="OMA" id="IPTFCRL"/>
<dbReference type="OrthoDB" id="10066656at2759"/>
<dbReference type="PAN-GO" id="Q8N3S3">
    <property type="GO annotations" value="0 GO annotations based on evolutionary models"/>
</dbReference>
<dbReference type="PhylomeDB" id="Q8N3S3"/>
<dbReference type="TreeFam" id="TF323570"/>
<dbReference type="PathwayCommons" id="Q8N3S3"/>
<dbReference type="SignaLink" id="Q8N3S3"/>
<dbReference type="BioGRID-ORCS" id="57157">
    <property type="hits" value="8 hits in 1166 CRISPR screens"/>
</dbReference>
<dbReference type="ChiTaRS" id="PHTF2">
    <property type="organism name" value="human"/>
</dbReference>
<dbReference type="GeneWiki" id="PHTF2"/>
<dbReference type="GenomeRNAi" id="57157"/>
<dbReference type="Pharos" id="Q8N3S3">
    <property type="development level" value="Tdark"/>
</dbReference>
<dbReference type="PRO" id="PR:Q8N3S3"/>
<dbReference type="Proteomes" id="UP000005640">
    <property type="component" value="Chromosome 7"/>
</dbReference>
<dbReference type="RNAct" id="Q8N3S3">
    <property type="molecule type" value="protein"/>
</dbReference>
<dbReference type="Bgee" id="ENSG00000006576">
    <property type="expression patterns" value="Expressed in tibia and 206 other cell types or tissues"/>
</dbReference>
<dbReference type="GO" id="GO:0005783">
    <property type="term" value="C:endoplasmic reticulum"/>
    <property type="evidence" value="ECO:0000314"/>
    <property type="project" value="LIFEdb"/>
</dbReference>
<dbReference type="GO" id="GO:0016020">
    <property type="term" value="C:membrane"/>
    <property type="evidence" value="ECO:0007669"/>
    <property type="project" value="UniProtKB-SubCell"/>
</dbReference>
<dbReference type="InterPro" id="IPR039775">
    <property type="entry name" value="PHTF1/2"/>
</dbReference>
<dbReference type="InterPro" id="IPR021980">
    <property type="entry name" value="PHTF1/2_N"/>
</dbReference>
<dbReference type="PANTHER" id="PTHR12680:SF2">
    <property type="entry name" value="PROTEIN PHTF2"/>
    <property type="match status" value="1"/>
</dbReference>
<dbReference type="PANTHER" id="PTHR12680">
    <property type="entry name" value="PUTATIVE HOMEODOMAIN TRANSCRIPTION FACTOR PHTF"/>
    <property type="match status" value="1"/>
</dbReference>
<dbReference type="Pfam" id="PF12129">
    <property type="entry name" value="PHTF1-2_N"/>
    <property type="match status" value="1"/>
</dbReference>
<evidence type="ECO:0000255" key="1"/>
<evidence type="ECO:0000256" key="2">
    <source>
        <dbReference type="SAM" id="MobiDB-lite"/>
    </source>
</evidence>
<evidence type="ECO:0000303" key="3">
    <source>
    </source>
</evidence>
<evidence type="ECO:0000303" key="4">
    <source>
    </source>
</evidence>
<evidence type="ECO:0000303" key="5">
    <source>
    </source>
</evidence>
<evidence type="ECO:0000305" key="6"/>
<keyword id="KW-0025">Alternative splicing</keyword>
<keyword id="KW-0325">Glycoprotein</keyword>
<keyword id="KW-0472">Membrane</keyword>
<keyword id="KW-1267">Proteomics identification</keyword>
<keyword id="KW-1185">Reference proteome</keyword>
<keyword id="KW-0812">Transmembrane</keyword>
<keyword id="KW-1133">Transmembrane helix</keyword>
<sequence length="785" mass="88757">MASKVTDAIVWYQKKEFLSVATTAPGPQQVLPGYCQCSLKDQGLFIQCLIGAYDQQIWEKSVEQREIKFIKLGLRNKPKKTAHVKPDLIDVDLVRGSAFAKAKPESPWTSLTRKGIVRVVFFPFFFRWWLQVTSKVIFFWLLVLYLLQVAAIVLFCSTSSPHSIPLTEVIGPIWLMLLLGTVHCQIVSTRTPKPPLSTGGKRRRKLRKAAHLEVHREGDGSSTTDNTQEGAVQNHGTSTSHSVGTVFRDLWHAAFFLSGSKKAKNSIDKSTETDNGYVSLDGKKTVKSGEDGIQNHEPQCETIRPEETAWNTGTLRNGPSKDTQRTITNVSDEVSSEEGPETGYSLRRHVDRTSEGVLRNRKSHHYKKHYPNEDAPKSGTSCSSRCSSSRQDSESARPESETEDVLWEDLLHCAECHSSCTSETDVENHQINPCVKKEYRDDPFHQSHLPWLHSSHPGLEKISAIVWEGNDCKKADMSVLEISGMIMNRVNSHIPGIGYQIFGNAVSLILGLTPFVFRLSQATDLEQLTAHSASELYVIAFGSNEDVIVLSMVIISFVVRVSLVWIFFFLLCVAERTYKQRLLFAKLFGHLTSARRARKSEVPHFRLKKVQNIKMWLSLRSYLKRRGPQRSVDVIVSSAFLLTISVVFICCAQLLHVHEIFLDCHYNWELVIWCISLTLFLLRFVTLGSETSKKYSNTSILLTEQINLYLKMEKKPNKKEELTLVNNVLKLATKLLKELDSPFRLYGLTMNPLLYNITQVVILSAVSGVISDLLGFNLKLWKIKS</sequence>